<proteinExistence type="inferred from homology"/>
<geneLocation type="chloroplast"/>
<sequence>MKVRASVRKICSRCVALKRHGVLIVLCSNPKHKQRQG</sequence>
<keyword id="KW-0150">Chloroplast</keyword>
<keyword id="KW-0934">Plastid</keyword>
<keyword id="KW-0687">Ribonucleoprotein</keyword>
<keyword id="KW-0689">Ribosomal protein</keyword>
<accession>Q9TLU9</accession>
<protein>
    <recommendedName>
        <fullName evidence="1">Large ribosomal subunit protein bL36c</fullName>
    </recommendedName>
    <alternativeName>
        <fullName>50S ribosomal protein L36, chloroplastic</fullName>
    </alternativeName>
</protein>
<evidence type="ECO:0000305" key="1"/>
<comment type="subcellular location">
    <subcellularLocation>
        <location>Plastid</location>
        <location>Chloroplast</location>
    </subcellularLocation>
</comment>
<comment type="similarity">
    <text evidence="1">Belongs to the bacterial ribosomal protein bL36 family.</text>
</comment>
<name>RK36_CYACA</name>
<reference key="1">
    <citation type="journal article" date="2000" name="J. Mol. Evol.">
        <title>The structure and gene repertoire of an ancient red algal plastid genome.</title>
        <authorList>
            <person name="Gloeckner G."/>
            <person name="Rosenthal A."/>
            <person name="Valentin K.-U."/>
        </authorList>
    </citation>
    <scope>NUCLEOTIDE SEQUENCE [LARGE SCALE GENOMIC DNA]</scope>
    <source>
        <strain>RK-1</strain>
    </source>
</reference>
<reference key="2">
    <citation type="journal article" date="1996" name="Plant Mol. Biol.">
        <title>A model for the evolution of the plastid sec apparatus inferred from secY gene phylogeny.</title>
        <authorList>
            <person name="Vogel H."/>
            <person name="Fischer S."/>
            <person name="Valentin K.-U."/>
        </authorList>
    </citation>
    <scope>NUCLEOTIDE SEQUENCE [GENOMIC DNA] OF 1-32</scope>
    <source>
        <strain>RK-1</strain>
    </source>
</reference>
<organism>
    <name type="scientific">Cyanidium caldarium</name>
    <name type="common">Red alga</name>
    <dbReference type="NCBI Taxonomy" id="2771"/>
    <lineage>
        <taxon>Eukaryota</taxon>
        <taxon>Rhodophyta</taxon>
        <taxon>Bangiophyceae</taxon>
        <taxon>Cyanidiales</taxon>
        <taxon>Cyanidiaceae</taxon>
        <taxon>Cyanidium</taxon>
    </lineage>
</organism>
<gene>
    <name type="primary">rpl36</name>
</gene>
<dbReference type="EMBL" id="AF022186">
    <property type="protein sequence ID" value="AAF12925.1"/>
    <property type="molecule type" value="Genomic_DNA"/>
</dbReference>
<dbReference type="RefSeq" id="NP_045169.1">
    <property type="nucleotide sequence ID" value="NC_001840.1"/>
</dbReference>
<dbReference type="SMR" id="Q9TLU9"/>
<dbReference type="GeneID" id="800252"/>
<dbReference type="GO" id="GO:0009507">
    <property type="term" value="C:chloroplast"/>
    <property type="evidence" value="ECO:0007669"/>
    <property type="project" value="UniProtKB-SubCell"/>
</dbReference>
<dbReference type="GO" id="GO:1990904">
    <property type="term" value="C:ribonucleoprotein complex"/>
    <property type="evidence" value="ECO:0007669"/>
    <property type="project" value="UniProtKB-KW"/>
</dbReference>
<dbReference type="GO" id="GO:0005840">
    <property type="term" value="C:ribosome"/>
    <property type="evidence" value="ECO:0007669"/>
    <property type="project" value="UniProtKB-KW"/>
</dbReference>
<dbReference type="GO" id="GO:0003735">
    <property type="term" value="F:structural constituent of ribosome"/>
    <property type="evidence" value="ECO:0007669"/>
    <property type="project" value="InterPro"/>
</dbReference>
<dbReference type="GO" id="GO:0006412">
    <property type="term" value="P:translation"/>
    <property type="evidence" value="ECO:0007669"/>
    <property type="project" value="UniProtKB-UniRule"/>
</dbReference>
<dbReference type="HAMAP" id="MF_00251">
    <property type="entry name" value="Ribosomal_bL36"/>
    <property type="match status" value="1"/>
</dbReference>
<dbReference type="InterPro" id="IPR000473">
    <property type="entry name" value="Ribosomal_bL36"/>
</dbReference>
<dbReference type="InterPro" id="IPR035977">
    <property type="entry name" value="Ribosomal_bL36_sp"/>
</dbReference>
<dbReference type="NCBIfam" id="TIGR01022">
    <property type="entry name" value="rpmJ_bact"/>
    <property type="match status" value="1"/>
</dbReference>
<dbReference type="PANTHER" id="PTHR42888">
    <property type="entry name" value="50S RIBOSOMAL PROTEIN L36, CHLOROPLASTIC"/>
    <property type="match status" value="1"/>
</dbReference>
<dbReference type="PANTHER" id="PTHR42888:SF1">
    <property type="entry name" value="LARGE RIBOSOMAL SUBUNIT PROTEIN BL36C"/>
    <property type="match status" value="1"/>
</dbReference>
<dbReference type="Pfam" id="PF00444">
    <property type="entry name" value="Ribosomal_L36"/>
    <property type="match status" value="1"/>
</dbReference>
<dbReference type="SUPFAM" id="SSF57840">
    <property type="entry name" value="Ribosomal protein L36"/>
    <property type="match status" value="1"/>
</dbReference>
<dbReference type="PROSITE" id="PS00828">
    <property type="entry name" value="RIBOSOMAL_L36"/>
    <property type="match status" value="1"/>
</dbReference>
<feature type="chain" id="PRO_0000126317" description="Large ribosomal subunit protein bL36c">
    <location>
        <begin position="1"/>
        <end position="37"/>
    </location>
</feature>